<gene>
    <name evidence="1" type="primary">aat</name>
    <name type="ordered locus">Mmc1_3260</name>
</gene>
<name>LFTR_MAGMM</name>
<keyword id="KW-0012">Acyltransferase</keyword>
<keyword id="KW-0963">Cytoplasm</keyword>
<keyword id="KW-1185">Reference proteome</keyword>
<keyword id="KW-0808">Transferase</keyword>
<dbReference type="EC" id="2.3.2.6" evidence="1"/>
<dbReference type="EMBL" id="CP000471">
    <property type="protein sequence ID" value="ABK45750.1"/>
    <property type="molecule type" value="Genomic_DNA"/>
</dbReference>
<dbReference type="RefSeq" id="WP_011714812.1">
    <property type="nucleotide sequence ID" value="NC_008576.1"/>
</dbReference>
<dbReference type="SMR" id="A0LCQ7"/>
<dbReference type="STRING" id="156889.Mmc1_3260"/>
<dbReference type="KEGG" id="mgm:Mmc1_3260"/>
<dbReference type="eggNOG" id="COG2360">
    <property type="taxonomic scope" value="Bacteria"/>
</dbReference>
<dbReference type="HOGENOM" id="CLU_075045_0_0_5"/>
<dbReference type="OrthoDB" id="9790282at2"/>
<dbReference type="Proteomes" id="UP000002586">
    <property type="component" value="Chromosome"/>
</dbReference>
<dbReference type="GO" id="GO:0005737">
    <property type="term" value="C:cytoplasm"/>
    <property type="evidence" value="ECO:0007669"/>
    <property type="project" value="UniProtKB-SubCell"/>
</dbReference>
<dbReference type="GO" id="GO:0008914">
    <property type="term" value="F:leucyl-tRNA--protein transferase activity"/>
    <property type="evidence" value="ECO:0007669"/>
    <property type="project" value="UniProtKB-UniRule"/>
</dbReference>
<dbReference type="GO" id="GO:0030163">
    <property type="term" value="P:protein catabolic process"/>
    <property type="evidence" value="ECO:0007669"/>
    <property type="project" value="UniProtKB-UniRule"/>
</dbReference>
<dbReference type="FunFam" id="3.30.70.3550:FF:000001">
    <property type="entry name" value="Leucyl/phenylalanyl-tRNA--protein transferase"/>
    <property type="match status" value="1"/>
</dbReference>
<dbReference type="FunFam" id="3.40.630.70:FF:000001">
    <property type="entry name" value="Leucyl/phenylalanyl-tRNA--protein transferase"/>
    <property type="match status" value="1"/>
</dbReference>
<dbReference type="Gene3D" id="3.40.630.70">
    <property type="entry name" value="Leucyl/phenylalanyl-tRNA-protein transferase, C-terminal domain"/>
    <property type="match status" value="1"/>
</dbReference>
<dbReference type="Gene3D" id="3.30.70.3550">
    <property type="entry name" value="Leucyl/phenylalanyl-tRNA-protein transferase, N-terminal domain"/>
    <property type="match status" value="1"/>
</dbReference>
<dbReference type="HAMAP" id="MF_00688">
    <property type="entry name" value="Leu_Phe_trans"/>
    <property type="match status" value="1"/>
</dbReference>
<dbReference type="InterPro" id="IPR016181">
    <property type="entry name" value="Acyl_CoA_acyltransferase"/>
</dbReference>
<dbReference type="InterPro" id="IPR004616">
    <property type="entry name" value="Leu/Phe-tRNA_Trfase"/>
</dbReference>
<dbReference type="InterPro" id="IPR042203">
    <property type="entry name" value="Leu/Phe-tRNA_Trfase_C"/>
</dbReference>
<dbReference type="InterPro" id="IPR042221">
    <property type="entry name" value="Leu/Phe-tRNA_Trfase_N"/>
</dbReference>
<dbReference type="NCBIfam" id="TIGR00667">
    <property type="entry name" value="aat"/>
    <property type="match status" value="1"/>
</dbReference>
<dbReference type="PANTHER" id="PTHR30098">
    <property type="entry name" value="LEUCYL/PHENYLALANYL-TRNA--PROTEIN TRANSFERASE"/>
    <property type="match status" value="1"/>
</dbReference>
<dbReference type="PANTHER" id="PTHR30098:SF2">
    <property type="entry name" value="LEUCYL_PHENYLALANYL-TRNA--PROTEIN TRANSFERASE"/>
    <property type="match status" value="1"/>
</dbReference>
<dbReference type="Pfam" id="PF03588">
    <property type="entry name" value="Leu_Phe_trans"/>
    <property type="match status" value="1"/>
</dbReference>
<dbReference type="SUPFAM" id="SSF55729">
    <property type="entry name" value="Acyl-CoA N-acyltransferases (Nat)"/>
    <property type="match status" value="1"/>
</dbReference>
<organism>
    <name type="scientific">Magnetococcus marinus (strain ATCC BAA-1437 / JCM 17883 / MC-1)</name>
    <dbReference type="NCBI Taxonomy" id="156889"/>
    <lineage>
        <taxon>Bacteria</taxon>
        <taxon>Pseudomonadati</taxon>
        <taxon>Pseudomonadota</taxon>
        <taxon>Alphaproteobacteria</taxon>
        <taxon>Magnetococcales</taxon>
        <taxon>Magnetococcaceae</taxon>
        <taxon>Magnetococcus</taxon>
    </lineage>
</organism>
<proteinExistence type="inferred from homology"/>
<comment type="function">
    <text evidence="1">Functions in the N-end rule pathway of protein degradation where it conjugates Leu, Phe and, less efficiently, Met from aminoacyl-tRNAs to the N-termini of proteins containing an N-terminal arginine or lysine.</text>
</comment>
<comment type="catalytic activity">
    <reaction evidence="1">
        <text>N-terminal L-lysyl-[protein] + L-leucyl-tRNA(Leu) = N-terminal L-leucyl-L-lysyl-[protein] + tRNA(Leu) + H(+)</text>
        <dbReference type="Rhea" id="RHEA:12340"/>
        <dbReference type="Rhea" id="RHEA-COMP:9613"/>
        <dbReference type="Rhea" id="RHEA-COMP:9622"/>
        <dbReference type="Rhea" id="RHEA-COMP:12670"/>
        <dbReference type="Rhea" id="RHEA-COMP:12671"/>
        <dbReference type="ChEBI" id="CHEBI:15378"/>
        <dbReference type="ChEBI" id="CHEBI:65249"/>
        <dbReference type="ChEBI" id="CHEBI:78442"/>
        <dbReference type="ChEBI" id="CHEBI:78494"/>
        <dbReference type="ChEBI" id="CHEBI:133043"/>
        <dbReference type="EC" id="2.3.2.6"/>
    </reaction>
</comment>
<comment type="catalytic activity">
    <reaction evidence="1">
        <text>N-terminal L-arginyl-[protein] + L-leucyl-tRNA(Leu) = N-terminal L-leucyl-L-arginyl-[protein] + tRNA(Leu) + H(+)</text>
        <dbReference type="Rhea" id="RHEA:50416"/>
        <dbReference type="Rhea" id="RHEA-COMP:9613"/>
        <dbReference type="Rhea" id="RHEA-COMP:9622"/>
        <dbReference type="Rhea" id="RHEA-COMP:12672"/>
        <dbReference type="Rhea" id="RHEA-COMP:12673"/>
        <dbReference type="ChEBI" id="CHEBI:15378"/>
        <dbReference type="ChEBI" id="CHEBI:64719"/>
        <dbReference type="ChEBI" id="CHEBI:78442"/>
        <dbReference type="ChEBI" id="CHEBI:78494"/>
        <dbReference type="ChEBI" id="CHEBI:133044"/>
        <dbReference type="EC" id="2.3.2.6"/>
    </reaction>
</comment>
<comment type="catalytic activity">
    <reaction evidence="1">
        <text>L-phenylalanyl-tRNA(Phe) + an N-terminal L-alpha-aminoacyl-[protein] = an N-terminal L-phenylalanyl-L-alpha-aminoacyl-[protein] + tRNA(Phe)</text>
        <dbReference type="Rhea" id="RHEA:43632"/>
        <dbReference type="Rhea" id="RHEA-COMP:9668"/>
        <dbReference type="Rhea" id="RHEA-COMP:9699"/>
        <dbReference type="Rhea" id="RHEA-COMP:10636"/>
        <dbReference type="Rhea" id="RHEA-COMP:10637"/>
        <dbReference type="ChEBI" id="CHEBI:78442"/>
        <dbReference type="ChEBI" id="CHEBI:78531"/>
        <dbReference type="ChEBI" id="CHEBI:78597"/>
        <dbReference type="ChEBI" id="CHEBI:83561"/>
        <dbReference type="EC" id="2.3.2.6"/>
    </reaction>
</comment>
<comment type="subcellular location">
    <subcellularLocation>
        <location evidence="1">Cytoplasm</location>
    </subcellularLocation>
</comment>
<comment type="similarity">
    <text evidence="1">Belongs to the L/F-transferase family.</text>
</comment>
<reference key="1">
    <citation type="journal article" date="2009" name="Appl. Environ. Microbiol.">
        <title>Complete genome sequence of the chemolithoautotrophic marine magnetotactic coccus strain MC-1.</title>
        <authorList>
            <person name="Schubbe S."/>
            <person name="Williams T.J."/>
            <person name="Xie G."/>
            <person name="Kiss H.E."/>
            <person name="Brettin T.S."/>
            <person name="Martinez D."/>
            <person name="Ross C.A."/>
            <person name="Schuler D."/>
            <person name="Cox B.L."/>
            <person name="Nealson K.H."/>
            <person name="Bazylinski D.A."/>
        </authorList>
    </citation>
    <scope>NUCLEOTIDE SEQUENCE [LARGE SCALE GENOMIC DNA]</scope>
    <source>
        <strain>ATCC BAA-1437 / JCM 17883 / MC-1</strain>
    </source>
</reference>
<feature type="chain" id="PRO_0000304341" description="Leucyl/phenylalanyl-tRNA--protein transferase">
    <location>
        <begin position="1"/>
        <end position="235"/>
    </location>
</feature>
<evidence type="ECO:0000255" key="1">
    <source>
        <dbReference type="HAMAP-Rule" id="MF_00688"/>
    </source>
</evidence>
<sequence length="235" mass="26148">MPVYRLAAEHNAFPPAEGANEDGLVAVGGDLSPQRLLAAYRSGIFPWYSAGEPLLWWSLDPRLVLRPPALHVPRSLKKAIRQGAFRITFDHVFEQVMHQCGAVRAAEGTWITPEMEQAYLRLHQMGFAHSCESWLMDENHRYQLAGGIYGVAIGGAFFGESMFYRQPNASKVALVALVGHLAQQGYSLMDCQMTTQHMLRFGAVEMPRSVFLEDLQQAIAQPIPAGLWQTVSPLI</sequence>
<protein>
    <recommendedName>
        <fullName evidence="1">Leucyl/phenylalanyl-tRNA--protein transferase</fullName>
        <ecNumber evidence="1">2.3.2.6</ecNumber>
    </recommendedName>
    <alternativeName>
        <fullName evidence="1">L/F-transferase</fullName>
    </alternativeName>
    <alternativeName>
        <fullName evidence="1">Leucyltransferase</fullName>
    </alternativeName>
    <alternativeName>
        <fullName evidence="1">Phenyalanyltransferase</fullName>
    </alternativeName>
</protein>
<accession>A0LCQ7</accession>